<organismHost>
    <name type="scientific">Equus caballus</name>
    <name type="common">Horse</name>
    <dbReference type="NCBI Taxonomy" id="9796"/>
</organismHost>
<organismHost>
    <name type="scientific">Homo sapiens</name>
    <name type="common">Human</name>
    <dbReference type="NCBI Taxonomy" id="9606"/>
</organismHost>
<organismHost>
    <name type="scientific">Pteropus alecto</name>
    <name type="common">Black flying fox</name>
    <dbReference type="NCBI Taxonomy" id="9402"/>
</organismHost>
<organismHost>
    <name type="scientific">Pteropus poliocephalus</name>
    <name type="common">Grey-headed flying fox</name>
    <dbReference type="NCBI Taxonomy" id="9403"/>
</organismHost>
<organismHost>
    <name type="scientific">Pteropus scapulatus</name>
    <name type="common">Little red flying fox</name>
    <dbReference type="NCBI Taxonomy" id="94117"/>
</organismHost>
<gene>
    <name type="primary">P/V/C</name>
</gene>
<reference key="1">
    <citation type="journal article" date="1996" name="Virus Res.">
        <title>Comparison of the deduced matrix and fusion protein sequences of equine morbillivirus with cognate genes of the Paramyxoviridae.</title>
        <authorList>
            <person name="Gould A.R."/>
        </authorList>
    </citation>
    <scope>NUCLEOTIDE SEQUENCE [GENOMIC RNA] OF 402-707</scope>
</reference>
<reference key="2">
    <citation type="journal article" date="1998" name="J. Virol.">
        <title>A novel P/V/C gene in a new member of the Paramyxoviridae family, which causes lethal infection in humans, horses, and other animals.</title>
        <authorList>
            <person name="Wang L.-F."/>
            <person name="Michalski W.P."/>
            <person name="Yu M."/>
            <person name="Pritchard L.I."/>
            <person name="Crameri G."/>
            <person name="Shiell B."/>
            <person name="Eaton B.T."/>
        </authorList>
    </citation>
    <scope>NUCLEOTIDE SEQUENCE [MRNA]</scope>
</reference>
<reference key="3">
    <citation type="journal article" date="2000" name="J. Virol.">
        <title>The exceptionally large genome of Hendra virus: support for creation of a new genus within the family Paramyxoviridae.</title>
        <authorList>
            <person name="Wang L.-F."/>
            <person name="Yu M."/>
            <person name="Hansson E."/>
            <person name="Pritchard L.I."/>
            <person name="Shiell B."/>
            <person name="Michalski W.P."/>
            <person name="Eaton B.T."/>
        </authorList>
    </citation>
    <scope>NUCLEOTIDE SEQUENCE [GENOMIC RNA]</scope>
</reference>
<accession>O55778</accession>
<accession>O89340</accession>
<accession>Q66759</accession>
<keyword id="KW-0002">3D-structure</keyword>
<keyword id="KW-0597">Phosphoprotein</keyword>
<keyword id="KW-1185">Reference proteome</keyword>
<keyword id="KW-0691">RNA editing</keyword>
<keyword id="KW-0693">Viral RNA replication</keyword>
<proteinExistence type="evidence at protein level"/>
<comment type="function">
    <text evidence="3 4">Essential cofactor of the RNA polymerase L that plays a central role in the transcription and replication by forming the polymerase complex with RNA polymerase L and recruiting L to the genomic N-RNA template for RNA synthesis (By similarity). Also plays a central role in the encapsidation of nascent RNA chains by forming the encapsidation complex with the nucleocapsid protein N (N-P complex). Acts as a chaperone for newly synthesized free N protein, so-called N0, allowing encapsidation of nascent RNA chains during replication (By similarity). The nucleoprotein protein N prevents excessive phosphorylation of P, which leads to down-regulation of viral transcription/ replication. Participates, together with N, in the formation of viral factories (viroplasms), which are large inclusions in the host cytoplasm where replication takes place (By similarity).</text>
</comment>
<comment type="subunit">
    <text evidence="3 4">Homotetramer. Interacts (via multimerization domain) with polymerase L; this interaction forms the polymerase L-P complex (By similarity). Interacts (via N-terminus) with N0 (via Ncore); this interaction allows P to chaperon N0 to avoid N polymerization before encapsidation. Interacts (via C-terminus) with N-RNA template; this interaction positions the polymerase on the template for both transcription and replication (By similarity).</text>
</comment>
<comment type="interaction">
    <interactant intactId="EBI-38273351">
        <id>O55778</id>
    </interactant>
    <interactant intactId="EBI-81531">
        <id>P11940</id>
        <label>PABPC1</label>
    </interactant>
    <organismsDiffer>true</organismsDiffer>
    <experiments>2</experiments>
</comment>
<comment type="domain">
    <text evidence="2 3 4">The N-terminus consists of a long intrinsically disordered tail. The central part contains the coiled-coil multimerization domain (PMD) (By similarity). Forms a four-stranded coiled coil structure (By similarity). The C-terminus constitutes the alpha-helical domain that binds to the nucleocapsid (N-RNA complex) (By similarity).</text>
</comment>
<comment type="RNA editing">
    <location>
        <position position="407"/>
    </location>
    <text>Partially edited. RNA editing at this position consists of an insertion of one or two guanine nucleotides. The sequence displayed here is the P protein, derived from the unedited RNA. The edited RNA gives rise to the V protein (+1G) (AC O55777), and the W protein (+2G) (AC P0C1C6).</text>
</comment>
<comment type="miscellaneous">
    <text>The P/V/C gene has two overlapping open reading frames. One encodes the P/V/W proteins and the other the C protein.</text>
</comment>
<evidence type="ECO:0000250" key="1"/>
<evidence type="ECO:0000250" key="2">
    <source>
        <dbReference type="UniProtKB" id="P04859"/>
    </source>
</evidence>
<evidence type="ECO:0000250" key="3">
    <source>
        <dbReference type="UniProtKB" id="P06162"/>
    </source>
</evidence>
<evidence type="ECO:0000250" key="4">
    <source>
        <dbReference type="UniProtKB" id="Q77M42"/>
    </source>
</evidence>
<evidence type="ECO:0000250" key="5">
    <source>
        <dbReference type="UniProtKB" id="Q9IK91"/>
    </source>
</evidence>
<evidence type="ECO:0000256" key="6">
    <source>
        <dbReference type="SAM" id="MobiDB-lite"/>
    </source>
</evidence>
<evidence type="ECO:0000305" key="7"/>
<evidence type="ECO:0007829" key="8">
    <source>
        <dbReference type="PDB" id="4HEO"/>
    </source>
</evidence>
<name>PHOSP_HENDH</name>
<feature type="chain" id="PRO_0000236012" description="Phosphoprotein">
    <location>
        <begin position="1"/>
        <end position="707"/>
    </location>
</feature>
<feature type="region of interest" description="N0 binding" evidence="5">
    <location>
        <begin position="1"/>
        <end position="35"/>
    </location>
</feature>
<feature type="region of interest" description="Disordered" evidence="6">
    <location>
        <begin position="26"/>
        <end position="103"/>
    </location>
</feature>
<feature type="region of interest" description="Disordered" evidence="6">
    <location>
        <begin position="193"/>
        <end position="229"/>
    </location>
</feature>
<feature type="region of interest" description="Disordered" evidence="6">
    <location>
        <begin position="254"/>
        <end position="446"/>
    </location>
</feature>
<feature type="region of interest" description="Disordered" evidence="6">
    <location>
        <begin position="454"/>
        <end position="473"/>
    </location>
</feature>
<feature type="region of interest" description="Multimerization" evidence="5">
    <location>
        <begin position="473"/>
        <end position="578"/>
    </location>
</feature>
<feature type="compositionally biased region" description="Polar residues" evidence="6">
    <location>
        <begin position="28"/>
        <end position="37"/>
    </location>
</feature>
<feature type="compositionally biased region" description="Polar residues" evidence="6">
    <location>
        <begin position="77"/>
        <end position="96"/>
    </location>
</feature>
<feature type="compositionally biased region" description="Basic and acidic residues" evidence="6">
    <location>
        <begin position="296"/>
        <end position="317"/>
    </location>
</feature>
<feature type="compositionally biased region" description="Polar residues" evidence="6">
    <location>
        <begin position="435"/>
        <end position="446"/>
    </location>
</feature>
<feature type="modified residue" description="Phosphoserine; by host" evidence="1">
    <location>
        <position position="257"/>
    </location>
</feature>
<feature type="modified residue" description="Phosphoserine; by host" evidence="1">
    <location>
        <position position="350"/>
    </location>
</feature>
<feature type="sequence conflict" description="In Ref. 1; AAB39503." evidence="7" ref="1">
    <original>A</original>
    <variation>V</variation>
    <location>
        <position position="408"/>
    </location>
</feature>
<feature type="sequence conflict" description="In Ref. 1; AAB39503." evidence="7" ref="1">
    <original>KYIMPSDDFANT</original>
    <variation>NILCHQMILLTL</variation>
    <location>
        <begin position="474"/>
        <end position="485"/>
    </location>
</feature>
<feature type="sequence conflict" description="In Ref. 1; AAB39503." evidence="7" ref="1">
    <original>I</original>
    <variation>M</variation>
    <location>
        <position position="574"/>
    </location>
</feature>
<feature type="sequence conflict" description="In Ref. 1; AAB39503." evidence="7" ref="1">
    <original>TDEEVQEVANTVNDIIDGNI</original>
    <variation>QMKRFRRWPIQSMILLMGTSKHVSNLIE</variation>
    <location>
        <begin position="688"/>
        <end position="707"/>
    </location>
</feature>
<feature type="helix" evidence="8">
    <location>
        <begin position="656"/>
        <end position="669"/>
    </location>
</feature>
<feature type="helix" evidence="8">
    <location>
        <begin position="673"/>
        <end position="685"/>
    </location>
</feature>
<feature type="helix" evidence="8">
    <location>
        <begin position="689"/>
        <end position="703"/>
    </location>
</feature>
<dbReference type="EMBL" id="U49404">
    <property type="protein sequence ID" value="AAB39503.1"/>
    <property type="molecule type" value="Genomic_RNA"/>
</dbReference>
<dbReference type="EMBL" id="AF010304">
    <property type="protein sequence ID" value="AAC04240.1"/>
    <property type="molecule type" value="mRNA"/>
</dbReference>
<dbReference type="EMBL" id="AF017149">
    <property type="protein sequence ID" value="AAC83188.2"/>
    <property type="molecule type" value="Genomic_RNA"/>
</dbReference>
<dbReference type="PIR" id="T08207">
    <property type="entry name" value="T08207"/>
</dbReference>
<dbReference type="PDB" id="4HEO">
    <property type="method" value="X-ray"/>
    <property type="resolution" value="1.65 A"/>
    <property type="chains" value="A/B=654-707"/>
</dbReference>
<dbReference type="PDB" id="6ILG">
    <property type="method" value="X-ray"/>
    <property type="resolution" value="2.60 A"/>
    <property type="chains" value="C=481-487"/>
</dbReference>
<dbReference type="PDB" id="6J2D">
    <property type="method" value="X-ray"/>
    <property type="resolution" value="2.31 A"/>
    <property type="chains" value="C=481-488"/>
</dbReference>
<dbReference type="PDB" id="6J2H">
    <property type="method" value="X-ray"/>
    <property type="resolution" value="2.30 A"/>
    <property type="chains" value="C/F=481-488"/>
</dbReference>
<dbReference type="PDB" id="6K7T">
    <property type="method" value="X-ray"/>
    <property type="resolution" value="1.60 A"/>
    <property type="chains" value="C=481-488"/>
</dbReference>
<dbReference type="PDBsum" id="4HEO"/>
<dbReference type="PDBsum" id="6ILG"/>
<dbReference type="PDBsum" id="6J2D"/>
<dbReference type="PDBsum" id="6J2H"/>
<dbReference type="PDBsum" id="6K7T"/>
<dbReference type="SMR" id="O55778"/>
<dbReference type="IntAct" id="O55778">
    <property type="interactions" value="1"/>
</dbReference>
<dbReference type="KEGG" id="vg:1446469"/>
<dbReference type="EvolutionaryTrace" id="O55778"/>
<dbReference type="Proteomes" id="UP000008771">
    <property type="component" value="Segment"/>
</dbReference>
<dbReference type="GO" id="GO:0032991">
    <property type="term" value="C:protein-containing complex"/>
    <property type="evidence" value="ECO:0000314"/>
    <property type="project" value="CAFA"/>
</dbReference>
<dbReference type="GO" id="GO:0097718">
    <property type="term" value="F:disordered domain specific binding"/>
    <property type="evidence" value="ECO:0000353"/>
    <property type="project" value="CAFA"/>
</dbReference>
<dbReference type="GO" id="GO:1990000">
    <property type="term" value="P:amyloid fibril formation"/>
    <property type="evidence" value="ECO:0000314"/>
    <property type="project" value="DisProt"/>
</dbReference>
<dbReference type="CDD" id="cd21031">
    <property type="entry name" value="MEV_P-protein-C_like"/>
    <property type="match status" value="1"/>
</dbReference>
<dbReference type="DisProt" id="DP00700"/>
<dbReference type="Gene3D" id="1.20.5.110">
    <property type="match status" value="1"/>
</dbReference>
<dbReference type="Gene3D" id="6.10.250.2490">
    <property type="match status" value="1"/>
</dbReference>
<dbReference type="Gene3D" id="1.10.8.10">
    <property type="entry name" value="DNA helicase RuvA subunit, C-terminal domain"/>
    <property type="match status" value="1"/>
</dbReference>
<dbReference type="InterPro" id="IPR004897">
    <property type="entry name" value="P/V_Pprotein_paramyxoviral"/>
</dbReference>
<dbReference type="InterPro" id="IPR028243">
    <property type="entry name" value="Paramyxo_P/V_N"/>
</dbReference>
<dbReference type="InterPro" id="IPR035430">
    <property type="entry name" value="Paramyxo_PNT"/>
</dbReference>
<dbReference type="InterPro" id="IPR025909">
    <property type="entry name" value="Soyouz_module"/>
</dbReference>
<dbReference type="Pfam" id="PF03210">
    <property type="entry name" value="Paramyx_P_V_C"/>
    <property type="match status" value="1"/>
</dbReference>
<dbReference type="Pfam" id="PF13825">
    <property type="entry name" value="Paramyxo_P_V_N"/>
    <property type="match status" value="1"/>
</dbReference>
<dbReference type="Pfam" id="PF14320">
    <property type="entry name" value="Paramyxo_PNT"/>
    <property type="match status" value="1"/>
</dbReference>
<dbReference type="Pfam" id="PF14313">
    <property type="entry name" value="Soyouz_module"/>
    <property type="match status" value="1"/>
</dbReference>
<organism>
    <name type="scientific">Hendra virus (isolate Horse/Autralia/Hendra/1994)</name>
    <dbReference type="NCBI Taxonomy" id="928303"/>
    <lineage>
        <taxon>Viruses</taxon>
        <taxon>Riboviria</taxon>
        <taxon>Orthornavirae</taxon>
        <taxon>Negarnaviricota</taxon>
        <taxon>Haploviricotina</taxon>
        <taxon>Monjiviricetes</taxon>
        <taxon>Mononegavirales</taxon>
        <taxon>Paramyxoviridae</taxon>
        <taxon>Orthoparamyxovirinae</taxon>
        <taxon>Henipavirus</taxon>
        <taxon>Henipavirus hendraense</taxon>
    </lineage>
</organism>
<protein>
    <recommendedName>
        <fullName>Phosphoprotein</fullName>
        <shortName>Protein P</shortName>
    </recommendedName>
</protein>
<sequence>MDKLDLVNDGLDIIDFIQKNQKEIQKTYGRSSIQQPSTKDRTRAWEDFLQSTSGEHEQAEGGMPKNDGGTEGRNVEDLSSVTSSDGTIGQRVSNTRAWAEDPDDIQLDPMVTDVVYHDHGGECTGHGPSSSPERGWSYHMSGTHDGNVRAVPDTKVLPNAPKTTVPEEVREIDLIGLEDKFASAGLNPAAVPFVPKNQSTPTEEPPVIPEYYYGSGRRGDLSKSPPRGNVNLDSIKIYTSDDEDENQLEYEDEFAKSSSEVVIDTTPEDNDSINQEEVVGDPSDQGLEHPFPLGKFPEKEETPDVRRKDSLMQDSCKRGGVPKRLPMLSEEFECSGSDDPIIQELEREGSHPGGSLRLREPPQSSGNSRNQPDRQLKTGDAASPGGVQRPGTPMPKSRIMPIKKGTDAKSQYVGTEDVPGSKSGATRYVRGLPPNQESKSVTAENVQLSAPSAVTRNEGHDQEVTSNEDSLDDKYIMPSDDFANTFLPHDTDRLNYHADHLNDYDLETLCEESVLMGIVNAIKLINIDMRLNHIEEQMKEIPKIINKIDSIDRVLAKTNTALSTIEGHLVSMMIMIPGKGKGERKGKTNPELKPVIGRNILEQQELFSFDNLKNFRDGSLTDEPYGGVARIRDDLILPELNFSETNASQFVPLADDASKDVVRTMIRTHIKDRELRSELMDYLNRAETDEEVQEVANTVNDIIDGNI</sequence>